<evidence type="ECO:0000255" key="1">
    <source>
        <dbReference type="HAMAP-Rule" id="MF_00444"/>
    </source>
</evidence>
<proteinExistence type="inferred from homology"/>
<protein>
    <recommendedName>
        <fullName evidence="1">ATP-dependent Clp protease proteolytic subunit</fullName>
        <ecNumber evidence="1">3.4.21.92</ecNumber>
    </recommendedName>
    <alternativeName>
        <fullName evidence="1">Endopeptidase Clp</fullName>
    </alternativeName>
</protein>
<name>CLPP_GOSHI</name>
<dbReference type="EC" id="3.4.21.92" evidence="1"/>
<dbReference type="EMBL" id="DQ345959">
    <property type="protein sequence ID" value="ABC73652.1"/>
    <property type="molecule type" value="Genomic_DNA"/>
</dbReference>
<dbReference type="RefSeq" id="YP_538961.1">
    <property type="nucleotide sequence ID" value="NC_007944.1"/>
</dbReference>
<dbReference type="SMR" id="Q2L926"/>
<dbReference type="MEROPS" id="S14.002"/>
<dbReference type="GeneID" id="3989129"/>
<dbReference type="KEGG" id="ghi:3989129"/>
<dbReference type="OrthoDB" id="26853at41938"/>
<dbReference type="Proteomes" id="UP000189702">
    <property type="component" value="Chloroplast Pltd"/>
</dbReference>
<dbReference type="GO" id="GO:0009570">
    <property type="term" value="C:chloroplast stroma"/>
    <property type="evidence" value="ECO:0007669"/>
    <property type="project" value="UniProtKB-SubCell"/>
</dbReference>
<dbReference type="GO" id="GO:0009368">
    <property type="term" value="C:endopeptidase Clp complex"/>
    <property type="evidence" value="ECO:0000318"/>
    <property type="project" value="GO_Central"/>
</dbReference>
<dbReference type="GO" id="GO:0004176">
    <property type="term" value="F:ATP-dependent peptidase activity"/>
    <property type="evidence" value="ECO:0000318"/>
    <property type="project" value="GO_Central"/>
</dbReference>
<dbReference type="GO" id="GO:0051117">
    <property type="term" value="F:ATPase binding"/>
    <property type="evidence" value="ECO:0000318"/>
    <property type="project" value="GO_Central"/>
</dbReference>
<dbReference type="GO" id="GO:0004252">
    <property type="term" value="F:serine-type endopeptidase activity"/>
    <property type="evidence" value="ECO:0000318"/>
    <property type="project" value="GO_Central"/>
</dbReference>
<dbReference type="GO" id="GO:0006515">
    <property type="term" value="P:protein quality control for misfolded or incompletely synthesized proteins"/>
    <property type="evidence" value="ECO:0000318"/>
    <property type="project" value="GO_Central"/>
</dbReference>
<dbReference type="CDD" id="cd07017">
    <property type="entry name" value="S14_ClpP_2"/>
    <property type="match status" value="1"/>
</dbReference>
<dbReference type="FunFam" id="3.90.226.10:FF:000006">
    <property type="entry name" value="ATP-dependent Clp protease proteolytic subunit"/>
    <property type="match status" value="1"/>
</dbReference>
<dbReference type="Gene3D" id="3.90.226.10">
    <property type="entry name" value="2-enoyl-CoA Hydratase, Chain A, domain 1"/>
    <property type="match status" value="1"/>
</dbReference>
<dbReference type="HAMAP" id="MF_00444">
    <property type="entry name" value="ClpP"/>
    <property type="match status" value="1"/>
</dbReference>
<dbReference type="InterPro" id="IPR001907">
    <property type="entry name" value="ClpP"/>
</dbReference>
<dbReference type="InterPro" id="IPR029045">
    <property type="entry name" value="ClpP/crotonase-like_dom_sf"/>
</dbReference>
<dbReference type="InterPro" id="IPR023562">
    <property type="entry name" value="ClpP/TepA"/>
</dbReference>
<dbReference type="InterPro" id="IPR033135">
    <property type="entry name" value="ClpP_His_AS"/>
</dbReference>
<dbReference type="InterPro" id="IPR018215">
    <property type="entry name" value="ClpP_Ser_AS"/>
</dbReference>
<dbReference type="PANTHER" id="PTHR10381">
    <property type="entry name" value="ATP-DEPENDENT CLP PROTEASE PROTEOLYTIC SUBUNIT"/>
    <property type="match status" value="1"/>
</dbReference>
<dbReference type="PANTHER" id="PTHR10381:SF15">
    <property type="entry name" value="CHLOROPLASTIC ATP-DEPENDENT CLP PROTEASE PROTEOLYTIC SUBUNIT 1"/>
    <property type="match status" value="1"/>
</dbReference>
<dbReference type="Pfam" id="PF00574">
    <property type="entry name" value="CLP_protease"/>
    <property type="match status" value="1"/>
</dbReference>
<dbReference type="PRINTS" id="PR00127">
    <property type="entry name" value="CLPPROTEASEP"/>
</dbReference>
<dbReference type="SUPFAM" id="SSF52096">
    <property type="entry name" value="ClpP/crotonase"/>
    <property type="match status" value="1"/>
</dbReference>
<dbReference type="PROSITE" id="PS00382">
    <property type="entry name" value="CLP_PROTEASE_HIS"/>
    <property type="match status" value="1"/>
</dbReference>
<dbReference type="PROSITE" id="PS00381">
    <property type="entry name" value="CLP_PROTEASE_SER"/>
    <property type="match status" value="1"/>
</dbReference>
<reference key="1">
    <citation type="journal article" date="2006" name="BMC Genomics">
        <title>The complete chloroplast genome sequence of Gossypium hirsutum: organization and phylogenetic relationships to other angiosperms.</title>
        <authorList>
            <person name="Lee S.-B."/>
            <person name="Kaittanis C."/>
            <person name="Jansen R.K."/>
            <person name="Hostetler J.B."/>
            <person name="Tallon L.J."/>
            <person name="Town C.D."/>
            <person name="Daniell H."/>
        </authorList>
    </citation>
    <scope>NUCLEOTIDE SEQUENCE [LARGE SCALE GENOMIC DNA]</scope>
    <source>
        <strain>cv. Coker 310FR</strain>
    </source>
</reference>
<accession>Q2L926</accession>
<geneLocation type="chloroplast"/>
<feature type="chain" id="PRO_0000275287" description="ATP-dependent Clp protease proteolytic subunit">
    <location>
        <begin position="1"/>
        <end position="196"/>
    </location>
</feature>
<feature type="active site" description="Nucleophile" evidence="1">
    <location>
        <position position="101"/>
    </location>
</feature>
<feature type="active site" evidence="1">
    <location>
        <position position="126"/>
    </location>
</feature>
<comment type="function">
    <text evidence="1">Cleaves peptides in various proteins in a process that requires ATP hydrolysis. Has a chymotrypsin-like activity. Plays a major role in the degradation of misfolded proteins.</text>
</comment>
<comment type="catalytic activity">
    <reaction evidence="1">
        <text>Hydrolysis of proteins to small peptides in the presence of ATP and magnesium. alpha-casein is the usual test substrate. In the absence of ATP, only oligopeptides shorter than five residues are hydrolyzed (such as succinyl-Leu-Tyr-|-NHMec, and Leu-Tyr-Leu-|-Tyr-Trp, in which cleavage of the -Tyr-|-Leu- and -Tyr-|-Trp bonds also occurs).</text>
        <dbReference type="EC" id="3.4.21.92"/>
    </reaction>
</comment>
<comment type="subunit">
    <text>Component of the chloroplastic Clp protease core complex.</text>
</comment>
<comment type="subcellular location">
    <subcellularLocation>
        <location evidence="1">Plastid</location>
        <location evidence="1">Chloroplast stroma</location>
    </subcellularLocation>
</comment>
<comment type="similarity">
    <text evidence="1">Belongs to the peptidase S14 family.</text>
</comment>
<sequence>MPIGVPKVPFRNPGEEDAVWVDVYNRLYRERLLFLGQEVDSEISNQLIGLMVYLSIENDTKDLYLFINSPGGWVIPGVAIYDTMQFVQPDVHTICMGLAASMGSFLLAGGEITKRLAFPHARVMIHQPASSFYEAQTGEFILEAEELLKLRESLTRVYVQRTGKPLWVVSEDMERDVFMSATEAQAHGIVDLVAVK</sequence>
<gene>
    <name evidence="1" type="primary">clpP</name>
</gene>
<organism>
    <name type="scientific">Gossypium hirsutum</name>
    <name type="common">Upland cotton</name>
    <name type="synonym">Gossypium mexicanum</name>
    <dbReference type="NCBI Taxonomy" id="3635"/>
    <lineage>
        <taxon>Eukaryota</taxon>
        <taxon>Viridiplantae</taxon>
        <taxon>Streptophyta</taxon>
        <taxon>Embryophyta</taxon>
        <taxon>Tracheophyta</taxon>
        <taxon>Spermatophyta</taxon>
        <taxon>Magnoliopsida</taxon>
        <taxon>eudicotyledons</taxon>
        <taxon>Gunneridae</taxon>
        <taxon>Pentapetalae</taxon>
        <taxon>rosids</taxon>
        <taxon>malvids</taxon>
        <taxon>Malvales</taxon>
        <taxon>Malvaceae</taxon>
        <taxon>Malvoideae</taxon>
        <taxon>Gossypium</taxon>
    </lineage>
</organism>
<keyword id="KW-0150">Chloroplast</keyword>
<keyword id="KW-0378">Hydrolase</keyword>
<keyword id="KW-0934">Plastid</keyword>
<keyword id="KW-0645">Protease</keyword>
<keyword id="KW-1185">Reference proteome</keyword>
<keyword id="KW-0720">Serine protease</keyword>